<accession>C0HLM2</accession>
<organism>
    <name type="scientific">Conus purpurascens</name>
    <name type="common">Purple cone</name>
    <dbReference type="NCBI Taxonomy" id="41690"/>
    <lineage>
        <taxon>Eukaryota</taxon>
        <taxon>Metazoa</taxon>
        <taxon>Spiralia</taxon>
        <taxon>Lophotrochozoa</taxon>
        <taxon>Mollusca</taxon>
        <taxon>Gastropoda</taxon>
        <taxon>Caenogastropoda</taxon>
        <taxon>Neogastropoda</taxon>
        <taxon>Conoidea</taxon>
        <taxon>Conidae</taxon>
        <taxon>Conus</taxon>
        <taxon>Chelyconus</taxon>
    </lineage>
</organism>
<feature type="peptide" id="PRO_0000448562" description="Alpha-conotoxin PIC" evidence="2">
    <location>
        <begin position="1"/>
        <end position="14"/>
    </location>
</feature>
<feature type="region of interest" description="Lacks the Ser-Xaa-Pro motif that is crucial for potent interaction with nAChR" evidence="4">
    <location>
        <begin position="5"/>
        <end position="7"/>
    </location>
</feature>
<feature type="modified residue" description="4-hydroxyproline" evidence="2">
    <location>
        <position position="7"/>
    </location>
</feature>
<sequence length="14" mass="1464">SGCCKHPACGKNRC</sequence>
<reference evidence="4" key="1">
    <citation type="journal article" date="2017" name="Neuropharmacology">
        <title>In vivo and in vitro testing of native alpha-conotoxins from the injected venom of Conus purpurascens.</title>
        <authorList>
            <person name="Hoggard M.F."/>
            <person name="Rodriguez A.M."/>
            <person name="Cano H."/>
            <person name="Clark E."/>
            <person name="Tae H.S."/>
            <person name="Adams D.J."/>
            <person name="Godenschwege T.A."/>
            <person name="Mari F."/>
        </authorList>
    </citation>
    <scope>PROTEIN SEQUENCE</scope>
    <scope>FUNCTION</scope>
    <scope>SUBCELLULAR LOCATION</scope>
    <scope>HYDROXYLATION AT PRO-7</scope>
    <scope>MASS SPECTROMETRY</scope>
    <source>
        <tissue evidence="3">Venom</tissue>
    </source>
</reference>
<protein>
    <recommendedName>
        <fullName evidence="3">Alpha-conotoxin PIC</fullName>
    </recommendedName>
</protein>
<dbReference type="GO" id="GO:0005576">
    <property type="term" value="C:extracellular region"/>
    <property type="evidence" value="ECO:0007669"/>
    <property type="project" value="UniProtKB-SubCell"/>
</dbReference>
<dbReference type="GO" id="GO:0035792">
    <property type="term" value="C:host cell postsynaptic membrane"/>
    <property type="evidence" value="ECO:0007669"/>
    <property type="project" value="UniProtKB-KW"/>
</dbReference>
<dbReference type="GO" id="GO:0030550">
    <property type="term" value="F:acetylcholine receptor inhibitor activity"/>
    <property type="evidence" value="ECO:0000314"/>
    <property type="project" value="UniProtKB"/>
</dbReference>
<dbReference type="GO" id="GO:0099106">
    <property type="term" value="F:ion channel regulator activity"/>
    <property type="evidence" value="ECO:0007669"/>
    <property type="project" value="UniProtKB-KW"/>
</dbReference>
<dbReference type="GO" id="GO:0090729">
    <property type="term" value="F:toxin activity"/>
    <property type="evidence" value="ECO:0000314"/>
    <property type="project" value="UniProtKB"/>
</dbReference>
<dbReference type="GO" id="GO:2000272">
    <property type="term" value="P:negative regulation of signaling receptor activity"/>
    <property type="evidence" value="ECO:0000314"/>
    <property type="project" value="UniProtKB"/>
</dbReference>
<name>CA1C_CONPU</name>
<proteinExistence type="evidence at protein level"/>
<keyword id="KW-0008">Acetylcholine receptor inhibiting toxin</keyword>
<keyword id="KW-0903">Direct protein sequencing</keyword>
<keyword id="KW-0379">Hydroxylation</keyword>
<keyword id="KW-0872">Ion channel impairing toxin</keyword>
<keyword id="KW-0528">Neurotoxin</keyword>
<keyword id="KW-0629">Postsynaptic neurotoxin</keyword>
<keyword id="KW-0964">Secreted</keyword>
<keyword id="KW-0800">Toxin</keyword>
<evidence type="ECO:0000250" key="1">
    <source>
        <dbReference type="UniProtKB" id="Q2I2R8"/>
    </source>
</evidence>
<evidence type="ECO:0000269" key="2">
    <source>
    </source>
</evidence>
<evidence type="ECO:0000303" key="3">
    <source>
    </source>
</evidence>
<evidence type="ECO:0000305" key="4"/>
<evidence type="ECO:0000305" key="5">
    <source>
    </source>
</evidence>
<comment type="function">
    <text evidence="1 2">Alpha-conotoxins bind to the nicotinic acetylcholine receptors (nAChR) and inhibit them. This toxin inhibits rodent (alpha-1-beta-1-delta-epsilon (CHRNA1-CHRNB1-CHRND-CHRNE)&gt; alpha-1-beta-1-delta-gamma (CHRNA1-CHRNB1-CHRNG-CHRND)) and human (alpha-3-beta-2/CHRNA3-CHRNB2) nAChRs heterologously expressed in Xenopus oocytes, but has minimal effect on human alpha-7/CHRNA7 nAChRs. Has no effect on the frequency of responses from the giant fiber (GF)-dorsal longitudinal and GF-tergo trochanteral muscle pathways in the D.melanogaster GF circuit (PubMed:28917942). Has possibly a distinct nAChR binding mode from other alpha-conotoxins, due to a different three residue motif (lacks the Ser-Xaa-Pro motif) (By similarity).</text>
</comment>
<comment type="subcellular location">
    <subcellularLocation>
        <location evidence="2">Secreted</location>
    </subcellularLocation>
</comment>
<comment type="tissue specificity">
    <text evidence="5">Expressed by the venom duct.</text>
</comment>
<comment type="domain">
    <text evidence="4">The cysteine framework is I (CC-C-C). Alpha4/7 pattern.</text>
</comment>
<comment type="PTM">
    <text evidence="2">A non-hydroxylated version of this conotoxin has been synthesized. Hydroxylation of Pro-7 seems to increase the inhibition of rodent alpha-1-beta-1-delta-epsilon and alpha-1-beta-1-delta-gamma nAChRs.</text>
</comment>
<comment type="mass spectrometry" mass="1460.13" method="MALDI" evidence="2"/>
<comment type="similarity">
    <text evidence="4">Belongs to the conotoxin A superfamily.</text>
</comment>